<keyword id="KW-0479">Metal-binding</keyword>
<keyword id="KW-0520">NAD</keyword>
<keyword id="KW-0560">Oxidoreductase</keyword>
<organism>
    <name type="scientific">Aeromonas salmonicida (strain A449)</name>
    <dbReference type="NCBI Taxonomy" id="382245"/>
    <lineage>
        <taxon>Bacteria</taxon>
        <taxon>Pseudomonadati</taxon>
        <taxon>Pseudomonadota</taxon>
        <taxon>Gammaproteobacteria</taxon>
        <taxon>Aeromonadales</taxon>
        <taxon>Aeromonadaceae</taxon>
        <taxon>Aeromonas</taxon>
    </lineage>
</organism>
<reference key="1">
    <citation type="journal article" date="2008" name="BMC Genomics">
        <title>The genome of Aeromonas salmonicida subsp. salmonicida A449: insights into the evolution of a fish pathogen.</title>
        <authorList>
            <person name="Reith M.E."/>
            <person name="Singh R.K."/>
            <person name="Curtis B."/>
            <person name="Boyd J.M."/>
            <person name="Bouevitch A."/>
            <person name="Kimball J."/>
            <person name="Munholland J."/>
            <person name="Murphy C."/>
            <person name="Sarty D."/>
            <person name="Williams J."/>
            <person name="Nash J.H."/>
            <person name="Johnson S.C."/>
            <person name="Brown L.L."/>
        </authorList>
    </citation>
    <scope>NUCLEOTIDE SEQUENCE [LARGE SCALE GENOMIC DNA]</scope>
    <source>
        <strain>A449</strain>
    </source>
</reference>
<proteinExistence type="inferred from homology"/>
<dbReference type="EC" id="1.1.1.38" evidence="1"/>
<dbReference type="EMBL" id="CP000644">
    <property type="protein sequence ID" value="ABO89371.1"/>
    <property type="molecule type" value="Genomic_DNA"/>
</dbReference>
<dbReference type="RefSeq" id="WP_005316813.1">
    <property type="nucleotide sequence ID" value="NC_009348.1"/>
</dbReference>
<dbReference type="SMR" id="A4SKE9"/>
<dbReference type="STRING" id="29491.GCA_000820065_01018"/>
<dbReference type="KEGG" id="asa:ASA_1264"/>
<dbReference type="eggNOG" id="COG0281">
    <property type="taxonomic scope" value="Bacteria"/>
</dbReference>
<dbReference type="HOGENOM" id="CLU_011405_5_2_6"/>
<dbReference type="Proteomes" id="UP000000225">
    <property type="component" value="Chromosome"/>
</dbReference>
<dbReference type="GO" id="GO:0005829">
    <property type="term" value="C:cytosol"/>
    <property type="evidence" value="ECO:0007669"/>
    <property type="project" value="TreeGrafter"/>
</dbReference>
<dbReference type="GO" id="GO:0004471">
    <property type="term" value="F:malate dehydrogenase (decarboxylating) (NAD+) activity"/>
    <property type="evidence" value="ECO:0007669"/>
    <property type="project" value="UniProtKB-UniRule"/>
</dbReference>
<dbReference type="GO" id="GO:0046872">
    <property type="term" value="F:metal ion binding"/>
    <property type="evidence" value="ECO:0007669"/>
    <property type="project" value="UniProtKB-KW"/>
</dbReference>
<dbReference type="GO" id="GO:0051287">
    <property type="term" value="F:NAD binding"/>
    <property type="evidence" value="ECO:0007669"/>
    <property type="project" value="InterPro"/>
</dbReference>
<dbReference type="GO" id="GO:0008948">
    <property type="term" value="F:oxaloacetate decarboxylase activity"/>
    <property type="evidence" value="ECO:0007669"/>
    <property type="project" value="UniProtKB-UniRule"/>
</dbReference>
<dbReference type="GO" id="GO:0006108">
    <property type="term" value="P:malate metabolic process"/>
    <property type="evidence" value="ECO:0007669"/>
    <property type="project" value="TreeGrafter"/>
</dbReference>
<dbReference type="CDD" id="cd05312">
    <property type="entry name" value="NAD_bind_1_malic_enz"/>
    <property type="match status" value="1"/>
</dbReference>
<dbReference type="FunFam" id="3.40.50.10380:FF:000001">
    <property type="entry name" value="NAD-dependent malic enzyme"/>
    <property type="match status" value="1"/>
</dbReference>
<dbReference type="FunFam" id="3.40.50.720:FF:000055">
    <property type="entry name" value="NAD-dependent malic enzyme"/>
    <property type="match status" value="1"/>
</dbReference>
<dbReference type="Gene3D" id="3.40.50.10380">
    <property type="entry name" value="Malic enzyme, N-terminal domain"/>
    <property type="match status" value="1"/>
</dbReference>
<dbReference type="Gene3D" id="3.40.50.720">
    <property type="entry name" value="NAD(P)-binding Rossmann-like Domain"/>
    <property type="match status" value="1"/>
</dbReference>
<dbReference type="HAMAP" id="MF_01619">
    <property type="entry name" value="NAD_malic_enz"/>
    <property type="match status" value="1"/>
</dbReference>
<dbReference type="InterPro" id="IPR046346">
    <property type="entry name" value="Aminoacid_DH-like_N_sf"/>
</dbReference>
<dbReference type="InterPro" id="IPR015884">
    <property type="entry name" value="Malic_enzyme_CS"/>
</dbReference>
<dbReference type="InterPro" id="IPR012301">
    <property type="entry name" value="Malic_N_dom"/>
</dbReference>
<dbReference type="InterPro" id="IPR037062">
    <property type="entry name" value="Malic_N_dom_sf"/>
</dbReference>
<dbReference type="InterPro" id="IPR012302">
    <property type="entry name" value="Malic_NAD-bd"/>
</dbReference>
<dbReference type="InterPro" id="IPR001891">
    <property type="entry name" value="Malic_OxRdtase"/>
</dbReference>
<dbReference type="InterPro" id="IPR036291">
    <property type="entry name" value="NAD(P)-bd_dom_sf"/>
</dbReference>
<dbReference type="InterPro" id="IPR023667">
    <property type="entry name" value="NAD_malic_enz_proteobac"/>
</dbReference>
<dbReference type="NCBIfam" id="NF010052">
    <property type="entry name" value="PRK13529.1"/>
    <property type="match status" value="1"/>
</dbReference>
<dbReference type="PANTHER" id="PTHR23406">
    <property type="entry name" value="MALIC ENZYME-RELATED"/>
    <property type="match status" value="1"/>
</dbReference>
<dbReference type="PANTHER" id="PTHR23406:SF34">
    <property type="entry name" value="NAD-DEPENDENT MALIC ENZYME, MITOCHONDRIAL"/>
    <property type="match status" value="1"/>
</dbReference>
<dbReference type="Pfam" id="PF00390">
    <property type="entry name" value="malic"/>
    <property type="match status" value="1"/>
</dbReference>
<dbReference type="Pfam" id="PF03949">
    <property type="entry name" value="Malic_M"/>
    <property type="match status" value="1"/>
</dbReference>
<dbReference type="PIRSF" id="PIRSF000106">
    <property type="entry name" value="ME"/>
    <property type="match status" value="1"/>
</dbReference>
<dbReference type="PRINTS" id="PR00072">
    <property type="entry name" value="MALOXRDTASE"/>
</dbReference>
<dbReference type="SMART" id="SM01274">
    <property type="entry name" value="malic"/>
    <property type="match status" value="1"/>
</dbReference>
<dbReference type="SMART" id="SM00919">
    <property type="entry name" value="Malic_M"/>
    <property type="match status" value="1"/>
</dbReference>
<dbReference type="SUPFAM" id="SSF53223">
    <property type="entry name" value="Aminoacid dehydrogenase-like, N-terminal domain"/>
    <property type="match status" value="1"/>
</dbReference>
<dbReference type="SUPFAM" id="SSF51735">
    <property type="entry name" value="NAD(P)-binding Rossmann-fold domains"/>
    <property type="match status" value="1"/>
</dbReference>
<dbReference type="PROSITE" id="PS00331">
    <property type="entry name" value="MALIC_ENZYMES"/>
    <property type="match status" value="1"/>
</dbReference>
<protein>
    <recommendedName>
        <fullName evidence="1">NAD-dependent malic enzyme</fullName>
        <shortName evidence="1">NAD-ME</shortName>
        <ecNumber evidence="1">1.1.1.38</ecNumber>
    </recommendedName>
</protein>
<gene>
    <name evidence="1" type="primary">maeA</name>
    <name type="ordered locus">ASA_1264</name>
</gene>
<evidence type="ECO:0000255" key="1">
    <source>
        <dbReference type="HAMAP-Rule" id="MF_01619"/>
    </source>
</evidence>
<accession>A4SKE9</accession>
<sequence length="564" mass="62521">MFEDNNQKRPLYIPYAGPALLETPLLNKGCAFTSEERSSFNLEGLLPQNIETIEEQAERAYRQFMAFGNDLDKHIYLRNIQDTNETLFYRLLHNHLTEMLPVIYTPTVGKACEEFSNIYRRARGLFISYPDKDRIDDMLQNATKQNVKVIVVTDGERILGLGDQGIGGMGIPIGKLSLYTACGGISPAYCLPVVLDVGTNNQQLLSDPFYMGWRNPRISGEEYAEFVDAFIQAVKRRWPDILLQFEDFAQNNAMPLLNRYKNELCCFNDDIQGTAAVTLGSLIAACKASGAKLSEKRVAFLGAGSAGCGIAEQIVAQMKAEGLTDAQARGRVFMVDRFGLITDKIPNQLDFQRRLSQPVGRIADWPVGDNISLLEVMEHGRPDILIGVSGQPGLFTEEVVKTMHKHCTRPIIFPLSNPTSRVEATPADLIRWTDGQALVATGSPFAPVEYKGKRYVIAQCNNSFIFPGIGLGVIASGATRVTDAMLMSASRALAECSPLVKGAEGSLLPDLADIHQVSRYIAKMVAKTAMLQGKAVQTPDEVIDQAIEANFWRPEYRRYRRTSF</sequence>
<name>MAO1_AERS4</name>
<feature type="chain" id="PRO_1000069526" description="NAD-dependent malic enzyme">
    <location>
        <begin position="1"/>
        <end position="564"/>
    </location>
</feature>
<feature type="active site" description="Proton donor" evidence="1">
    <location>
        <position position="104"/>
    </location>
</feature>
<feature type="active site" description="Proton acceptor" evidence="1">
    <location>
        <position position="175"/>
    </location>
</feature>
<feature type="binding site" evidence="1">
    <location>
        <position position="157"/>
    </location>
    <ligand>
        <name>NAD(+)</name>
        <dbReference type="ChEBI" id="CHEBI:57540"/>
    </ligand>
</feature>
<feature type="binding site" evidence="1">
    <location>
        <position position="246"/>
    </location>
    <ligand>
        <name>a divalent metal cation</name>
        <dbReference type="ChEBI" id="CHEBI:60240"/>
    </ligand>
</feature>
<feature type="binding site" evidence="1">
    <location>
        <position position="247"/>
    </location>
    <ligand>
        <name>a divalent metal cation</name>
        <dbReference type="ChEBI" id="CHEBI:60240"/>
    </ligand>
</feature>
<feature type="binding site" evidence="1">
    <location>
        <position position="270"/>
    </location>
    <ligand>
        <name>a divalent metal cation</name>
        <dbReference type="ChEBI" id="CHEBI:60240"/>
    </ligand>
</feature>
<feature type="binding site" evidence="1">
    <location>
        <position position="270"/>
    </location>
    <ligand>
        <name>NAD(+)</name>
        <dbReference type="ChEBI" id="CHEBI:57540"/>
    </ligand>
</feature>
<feature type="binding site" evidence="1">
    <location>
        <position position="417"/>
    </location>
    <ligand>
        <name>NAD(+)</name>
        <dbReference type="ChEBI" id="CHEBI:57540"/>
    </ligand>
</feature>
<feature type="site" description="Important for activity" evidence="1">
    <location>
        <position position="270"/>
    </location>
</feature>
<comment type="catalytic activity">
    <reaction evidence="1">
        <text>(S)-malate + NAD(+) = pyruvate + CO2 + NADH</text>
        <dbReference type="Rhea" id="RHEA:12653"/>
        <dbReference type="ChEBI" id="CHEBI:15361"/>
        <dbReference type="ChEBI" id="CHEBI:15589"/>
        <dbReference type="ChEBI" id="CHEBI:16526"/>
        <dbReference type="ChEBI" id="CHEBI:57540"/>
        <dbReference type="ChEBI" id="CHEBI:57945"/>
        <dbReference type="EC" id="1.1.1.38"/>
    </reaction>
</comment>
<comment type="catalytic activity">
    <reaction evidence="1">
        <text>oxaloacetate + H(+) = pyruvate + CO2</text>
        <dbReference type="Rhea" id="RHEA:15641"/>
        <dbReference type="ChEBI" id="CHEBI:15361"/>
        <dbReference type="ChEBI" id="CHEBI:15378"/>
        <dbReference type="ChEBI" id="CHEBI:16452"/>
        <dbReference type="ChEBI" id="CHEBI:16526"/>
        <dbReference type="EC" id="1.1.1.38"/>
    </reaction>
</comment>
<comment type="cofactor">
    <cofactor evidence="1">
        <name>Mg(2+)</name>
        <dbReference type="ChEBI" id="CHEBI:18420"/>
    </cofactor>
    <cofactor evidence="1">
        <name>Mn(2+)</name>
        <dbReference type="ChEBI" id="CHEBI:29035"/>
    </cofactor>
    <text evidence="1">Divalent metal cations. Prefers magnesium or manganese.</text>
</comment>
<comment type="subunit">
    <text evidence="1">Homotetramer.</text>
</comment>
<comment type="similarity">
    <text evidence="1">Belongs to the malic enzymes family.</text>
</comment>